<sequence length="291" mass="29566">MTTLAIDIGGTKLAAALIGADGQIRDRRELPTPASQTPEALRDALSALVSPLQAHAQRVAIASTGIIRDGSLLALNPHNLGGLLHFPLVKTLGQLTDLPTIAINDAQAAAWAEYQALEGDITDMVFITVSTGVGGGVVSGGKLLTGPGGLAGHIGHTLADPHGPVCGCGRTGCVEAIASGRGIAAAAQGELAGADAKTIFMRAGQGDEQAQQLIHRSAHVLARLIADIKATTDCQCVVVGGSVGLAEGYLALVETYLAQEPAAFHVDLLAAHYRHDAGLLGAALLAQGEKL</sequence>
<feature type="chain" id="PRO_0000095696" description="N-acetylmannosamine kinase">
    <location>
        <begin position="1"/>
        <end position="291"/>
    </location>
</feature>
<feature type="binding site" evidence="1">
    <location>
        <begin position="5"/>
        <end position="12"/>
    </location>
    <ligand>
        <name>ATP</name>
        <dbReference type="ChEBI" id="CHEBI:30616"/>
    </ligand>
</feature>
<feature type="binding site" evidence="1">
    <location>
        <begin position="132"/>
        <end position="139"/>
    </location>
    <ligand>
        <name>ATP</name>
        <dbReference type="ChEBI" id="CHEBI:30616"/>
    </ligand>
</feature>
<feature type="binding site" evidence="1">
    <location>
        <position position="156"/>
    </location>
    <ligand>
        <name>Zn(2+)</name>
        <dbReference type="ChEBI" id="CHEBI:29105"/>
    </ligand>
</feature>
<feature type="binding site" evidence="1">
    <location>
        <position position="166"/>
    </location>
    <ligand>
        <name>Zn(2+)</name>
        <dbReference type="ChEBI" id="CHEBI:29105"/>
    </ligand>
</feature>
<feature type="binding site" evidence="1">
    <location>
        <position position="168"/>
    </location>
    <ligand>
        <name>Zn(2+)</name>
        <dbReference type="ChEBI" id="CHEBI:29105"/>
    </ligand>
</feature>
<feature type="binding site" evidence="1">
    <location>
        <position position="173"/>
    </location>
    <ligand>
        <name>Zn(2+)</name>
        <dbReference type="ChEBI" id="CHEBI:29105"/>
    </ligand>
</feature>
<protein>
    <recommendedName>
        <fullName evidence="1">N-acetylmannosamine kinase</fullName>
        <ecNumber evidence="1">2.7.1.60</ecNumber>
    </recommendedName>
    <alternativeName>
        <fullName evidence="1">ManNAc kinase</fullName>
    </alternativeName>
    <alternativeName>
        <fullName evidence="1">N-acetyl-D-mannosamine kinase</fullName>
    </alternativeName>
</protein>
<name>NANK_ECO57</name>
<accession>Q8X9H0</accession>
<keyword id="KW-0067">ATP-binding</keyword>
<keyword id="KW-0119">Carbohydrate metabolism</keyword>
<keyword id="KW-0418">Kinase</keyword>
<keyword id="KW-0479">Metal-binding</keyword>
<keyword id="KW-0547">Nucleotide-binding</keyword>
<keyword id="KW-1185">Reference proteome</keyword>
<keyword id="KW-0808">Transferase</keyword>
<keyword id="KW-0862">Zinc</keyword>
<gene>
    <name evidence="1" type="primary">nanK</name>
    <name type="ordered locus">Z4580</name>
    <name type="ordered locus">ECs4095</name>
</gene>
<organism>
    <name type="scientific">Escherichia coli O157:H7</name>
    <dbReference type="NCBI Taxonomy" id="83334"/>
    <lineage>
        <taxon>Bacteria</taxon>
        <taxon>Pseudomonadati</taxon>
        <taxon>Pseudomonadota</taxon>
        <taxon>Gammaproteobacteria</taxon>
        <taxon>Enterobacterales</taxon>
        <taxon>Enterobacteriaceae</taxon>
        <taxon>Escherichia</taxon>
    </lineage>
</organism>
<proteinExistence type="inferred from homology"/>
<dbReference type="EC" id="2.7.1.60" evidence="1"/>
<dbReference type="EMBL" id="AE005174">
    <property type="protein sequence ID" value="AAG58350.1"/>
    <property type="status" value="ALT_INIT"/>
    <property type="molecule type" value="Genomic_DNA"/>
</dbReference>
<dbReference type="EMBL" id="BA000007">
    <property type="protein sequence ID" value="BAB37518.1"/>
    <property type="status" value="ALT_INIT"/>
    <property type="molecule type" value="Genomic_DNA"/>
</dbReference>
<dbReference type="PIR" id="B85986">
    <property type="entry name" value="B85986"/>
</dbReference>
<dbReference type="PIR" id="G91140">
    <property type="entry name" value="G91140"/>
</dbReference>
<dbReference type="RefSeq" id="NP_312122.2">
    <property type="nucleotide sequence ID" value="NC_002695.1"/>
</dbReference>
<dbReference type="RefSeq" id="WP_000209030.1">
    <property type="nucleotide sequence ID" value="NZ_VOAI01000014.1"/>
</dbReference>
<dbReference type="SMR" id="Q8X9H0"/>
<dbReference type="STRING" id="155864.Z4580"/>
<dbReference type="GeneID" id="916056"/>
<dbReference type="KEGG" id="ece:Z4580"/>
<dbReference type="KEGG" id="ecs:ECs_4095"/>
<dbReference type="PATRIC" id="fig|386585.9.peg.4275"/>
<dbReference type="eggNOG" id="COG1940">
    <property type="taxonomic scope" value="Bacteria"/>
</dbReference>
<dbReference type="HOGENOM" id="CLU_036604_0_4_6"/>
<dbReference type="OMA" id="PICGCGR"/>
<dbReference type="UniPathway" id="UPA00629">
    <property type="reaction ID" value="UER00681"/>
</dbReference>
<dbReference type="Proteomes" id="UP000000558">
    <property type="component" value="Chromosome"/>
</dbReference>
<dbReference type="Proteomes" id="UP000002519">
    <property type="component" value="Chromosome"/>
</dbReference>
<dbReference type="GO" id="GO:0005524">
    <property type="term" value="F:ATP binding"/>
    <property type="evidence" value="ECO:0007669"/>
    <property type="project" value="UniProtKB-UniRule"/>
</dbReference>
<dbReference type="GO" id="GO:0009384">
    <property type="term" value="F:N-acylmannosamine kinase activity"/>
    <property type="evidence" value="ECO:0007669"/>
    <property type="project" value="UniProtKB-UniRule"/>
</dbReference>
<dbReference type="GO" id="GO:0008270">
    <property type="term" value="F:zinc ion binding"/>
    <property type="evidence" value="ECO:0007669"/>
    <property type="project" value="UniProtKB-UniRule"/>
</dbReference>
<dbReference type="GO" id="GO:0019262">
    <property type="term" value="P:N-acetylneuraminate catabolic process"/>
    <property type="evidence" value="ECO:0007669"/>
    <property type="project" value="UniProtKB-UniRule"/>
</dbReference>
<dbReference type="CDD" id="cd24069">
    <property type="entry name" value="ASKHA_NBD_ROK_EcNanK-like"/>
    <property type="match status" value="1"/>
</dbReference>
<dbReference type="FunFam" id="3.30.420.40:FF:000062">
    <property type="entry name" value="N-acetylmannosamine kinase"/>
    <property type="match status" value="1"/>
</dbReference>
<dbReference type="FunFam" id="3.30.420.40:FF:000063">
    <property type="entry name" value="N-acetylmannosamine kinase"/>
    <property type="match status" value="1"/>
</dbReference>
<dbReference type="Gene3D" id="3.30.420.40">
    <property type="match status" value="2"/>
</dbReference>
<dbReference type="HAMAP" id="MF_01234">
    <property type="entry name" value="ManNAc_kinase"/>
    <property type="match status" value="1"/>
</dbReference>
<dbReference type="InterPro" id="IPR043129">
    <property type="entry name" value="ATPase_NBD"/>
</dbReference>
<dbReference type="InterPro" id="IPR023945">
    <property type="entry name" value="ManNAc_kinase_bac"/>
</dbReference>
<dbReference type="InterPro" id="IPR000600">
    <property type="entry name" value="ROK"/>
</dbReference>
<dbReference type="InterPro" id="IPR049874">
    <property type="entry name" value="ROK_cs"/>
</dbReference>
<dbReference type="NCBIfam" id="NF047821">
    <property type="entry name" value="NactlManKinNanK"/>
    <property type="match status" value="1"/>
</dbReference>
<dbReference type="NCBIfam" id="NF003461">
    <property type="entry name" value="PRK05082.1"/>
    <property type="match status" value="1"/>
</dbReference>
<dbReference type="PANTHER" id="PTHR18964:SF169">
    <property type="entry name" value="N-ACETYLMANNOSAMINE KINASE"/>
    <property type="match status" value="1"/>
</dbReference>
<dbReference type="PANTHER" id="PTHR18964">
    <property type="entry name" value="ROK (REPRESSOR, ORF, KINASE) FAMILY"/>
    <property type="match status" value="1"/>
</dbReference>
<dbReference type="Pfam" id="PF00480">
    <property type="entry name" value="ROK"/>
    <property type="match status" value="1"/>
</dbReference>
<dbReference type="SUPFAM" id="SSF53067">
    <property type="entry name" value="Actin-like ATPase domain"/>
    <property type="match status" value="1"/>
</dbReference>
<dbReference type="PROSITE" id="PS01125">
    <property type="entry name" value="ROK"/>
    <property type="match status" value="1"/>
</dbReference>
<reference key="1">
    <citation type="journal article" date="2001" name="Nature">
        <title>Genome sequence of enterohaemorrhagic Escherichia coli O157:H7.</title>
        <authorList>
            <person name="Perna N.T."/>
            <person name="Plunkett G. III"/>
            <person name="Burland V."/>
            <person name="Mau B."/>
            <person name="Glasner J.D."/>
            <person name="Rose D.J."/>
            <person name="Mayhew G.F."/>
            <person name="Evans P.S."/>
            <person name="Gregor J."/>
            <person name="Kirkpatrick H.A."/>
            <person name="Posfai G."/>
            <person name="Hackett J."/>
            <person name="Klink S."/>
            <person name="Boutin A."/>
            <person name="Shao Y."/>
            <person name="Miller L."/>
            <person name="Grotbeck E.J."/>
            <person name="Davis N.W."/>
            <person name="Lim A."/>
            <person name="Dimalanta E.T."/>
            <person name="Potamousis K."/>
            <person name="Apodaca J."/>
            <person name="Anantharaman T.S."/>
            <person name="Lin J."/>
            <person name="Yen G."/>
            <person name="Schwartz D.C."/>
            <person name="Welch R.A."/>
            <person name="Blattner F.R."/>
        </authorList>
    </citation>
    <scope>NUCLEOTIDE SEQUENCE [LARGE SCALE GENOMIC DNA]</scope>
    <source>
        <strain>O157:H7 / EDL933 / ATCC 700927 / EHEC</strain>
    </source>
</reference>
<reference key="2">
    <citation type="journal article" date="2001" name="DNA Res.">
        <title>Complete genome sequence of enterohemorrhagic Escherichia coli O157:H7 and genomic comparison with a laboratory strain K-12.</title>
        <authorList>
            <person name="Hayashi T."/>
            <person name="Makino K."/>
            <person name="Ohnishi M."/>
            <person name="Kurokawa K."/>
            <person name="Ishii K."/>
            <person name="Yokoyama K."/>
            <person name="Han C.-G."/>
            <person name="Ohtsubo E."/>
            <person name="Nakayama K."/>
            <person name="Murata T."/>
            <person name="Tanaka M."/>
            <person name="Tobe T."/>
            <person name="Iida T."/>
            <person name="Takami H."/>
            <person name="Honda T."/>
            <person name="Sasakawa C."/>
            <person name="Ogasawara N."/>
            <person name="Yasunaga T."/>
            <person name="Kuhara S."/>
            <person name="Shiba T."/>
            <person name="Hattori M."/>
            <person name="Shinagawa H."/>
        </authorList>
    </citation>
    <scope>NUCLEOTIDE SEQUENCE [LARGE SCALE GENOMIC DNA]</scope>
    <source>
        <strain>O157:H7 / Sakai / RIMD 0509952 / EHEC</strain>
    </source>
</reference>
<evidence type="ECO:0000255" key="1">
    <source>
        <dbReference type="HAMAP-Rule" id="MF_01234"/>
    </source>
</evidence>
<evidence type="ECO:0000305" key="2"/>
<comment type="function">
    <text evidence="1">Catalyzes the phosphorylation of N-acetylmannosamine (ManNAc) to ManNAc-6-P.</text>
</comment>
<comment type="catalytic activity">
    <reaction evidence="1">
        <text>an N-acyl-D-mannosamine + ATP = an N-acyl-D-mannosamine 6-phosphate + ADP + H(+)</text>
        <dbReference type="Rhea" id="RHEA:23832"/>
        <dbReference type="ChEBI" id="CHEBI:15378"/>
        <dbReference type="ChEBI" id="CHEBI:16062"/>
        <dbReference type="ChEBI" id="CHEBI:30616"/>
        <dbReference type="ChEBI" id="CHEBI:57666"/>
        <dbReference type="ChEBI" id="CHEBI:456216"/>
        <dbReference type="EC" id="2.7.1.60"/>
    </reaction>
</comment>
<comment type="pathway">
    <text evidence="1">Amino-sugar metabolism; N-acetylneuraminate degradation; D-fructose 6-phosphate from N-acetylneuraminate: step 2/5.</text>
</comment>
<comment type="subunit">
    <text evidence="1">Homodimer.</text>
</comment>
<comment type="similarity">
    <text evidence="1">Belongs to the ROK (NagC/XylR) family. NanK subfamily.</text>
</comment>
<comment type="sequence caution" evidence="2">
    <conflict type="erroneous initiation">
        <sequence resource="EMBL-CDS" id="AAG58350"/>
    </conflict>
</comment>
<comment type="sequence caution" evidence="2">
    <conflict type="erroneous initiation">
        <sequence resource="EMBL-CDS" id="BAB37518"/>
    </conflict>
</comment>